<dbReference type="EMBL" id="AB169116">
    <property type="protein sequence ID" value="BAE01210.1"/>
    <property type="molecule type" value="mRNA"/>
</dbReference>
<dbReference type="SMR" id="Q4R6R4"/>
<dbReference type="STRING" id="9541.ENSMFAP00000043322"/>
<dbReference type="eggNOG" id="KOG2297">
    <property type="taxonomic scope" value="Eukaryota"/>
</dbReference>
<dbReference type="Proteomes" id="UP000233100">
    <property type="component" value="Unplaced"/>
</dbReference>
<dbReference type="GO" id="GO:0005737">
    <property type="term" value="C:cytoplasm"/>
    <property type="evidence" value="ECO:0000250"/>
    <property type="project" value="UniProtKB"/>
</dbReference>
<dbReference type="GO" id="GO:0016020">
    <property type="term" value="C:membrane"/>
    <property type="evidence" value="ECO:0007669"/>
    <property type="project" value="TreeGrafter"/>
</dbReference>
<dbReference type="GO" id="GO:0006446">
    <property type="term" value="P:regulation of translational initiation"/>
    <property type="evidence" value="ECO:0000250"/>
    <property type="project" value="UniProtKB"/>
</dbReference>
<dbReference type="CDD" id="cd11560">
    <property type="entry name" value="W2_eIF5C_like"/>
    <property type="match status" value="1"/>
</dbReference>
<dbReference type="FunFam" id="1.25.40.180:FF:000006">
    <property type="entry name" value="Basic leucine zipper and W2 domain-containing protein 1"/>
    <property type="match status" value="1"/>
</dbReference>
<dbReference type="Gene3D" id="1.25.40.180">
    <property type="match status" value="1"/>
</dbReference>
<dbReference type="InterPro" id="IPR016024">
    <property type="entry name" value="ARM-type_fold"/>
</dbReference>
<dbReference type="InterPro" id="IPR051245">
    <property type="entry name" value="eIF5-mimic_regulator"/>
</dbReference>
<dbReference type="InterPro" id="IPR043510">
    <property type="entry name" value="W2_BZW1/2"/>
</dbReference>
<dbReference type="InterPro" id="IPR003307">
    <property type="entry name" value="W2_domain"/>
</dbReference>
<dbReference type="PANTHER" id="PTHR14208">
    <property type="entry name" value="BASIC LEUCINE ZIPPER AND W2 DOMAIN-CONTAINING PROTEIN"/>
    <property type="match status" value="1"/>
</dbReference>
<dbReference type="PANTHER" id="PTHR14208:SF7">
    <property type="entry name" value="EIF5-MIMIC PROTEIN 1"/>
    <property type="match status" value="1"/>
</dbReference>
<dbReference type="Pfam" id="PF25504">
    <property type="entry name" value="HEAT_5MP1_2"/>
    <property type="match status" value="1"/>
</dbReference>
<dbReference type="Pfam" id="PF02020">
    <property type="entry name" value="W2"/>
    <property type="match status" value="1"/>
</dbReference>
<dbReference type="SMART" id="SM00515">
    <property type="entry name" value="eIF5C"/>
    <property type="match status" value="1"/>
</dbReference>
<dbReference type="SUPFAM" id="SSF48371">
    <property type="entry name" value="ARM repeat"/>
    <property type="match status" value="1"/>
</dbReference>
<dbReference type="PROSITE" id="PS51363">
    <property type="entry name" value="W2"/>
    <property type="match status" value="1"/>
</dbReference>
<protein>
    <recommendedName>
        <fullName evidence="1">eIF5-mimic protein 1</fullName>
    </recommendedName>
    <alternativeName>
        <fullName>Basic leucine zipper and W2 domain-containing protein 2</fullName>
    </alternativeName>
</protein>
<organism>
    <name type="scientific">Macaca fascicularis</name>
    <name type="common">Crab-eating macaque</name>
    <name type="synonym">Cynomolgus monkey</name>
    <dbReference type="NCBI Taxonomy" id="9541"/>
    <lineage>
        <taxon>Eukaryota</taxon>
        <taxon>Metazoa</taxon>
        <taxon>Chordata</taxon>
        <taxon>Craniata</taxon>
        <taxon>Vertebrata</taxon>
        <taxon>Euteleostomi</taxon>
        <taxon>Mammalia</taxon>
        <taxon>Eutheria</taxon>
        <taxon>Euarchontoglires</taxon>
        <taxon>Primates</taxon>
        <taxon>Haplorrhini</taxon>
        <taxon>Catarrhini</taxon>
        <taxon>Cercopithecidae</taxon>
        <taxon>Cercopithecinae</taxon>
        <taxon>Macaca</taxon>
    </lineage>
</organism>
<evidence type="ECO:0000250" key="1">
    <source>
        <dbReference type="UniProtKB" id="Q9Y6E2"/>
    </source>
</evidence>
<evidence type="ECO:0000255" key="2">
    <source>
        <dbReference type="PROSITE-ProRule" id="PRU00695"/>
    </source>
</evidence>
<evidence type="ECO:0000256" key="3">
    <source>
        <dbReference type="SAM" id="MobiDB-lite"/>
    </source>
</evidence>
<evidence type="ECO:0000305" key="4"/>
<gene>
    <name type="primary">BZW2</name>
    <name evidence="1" type="synonym">5MP1</name>
    <name type="ORF">QtsA-17345</name>
</gene>
<feature type="chain" id="PRO_0000254619" description="eIF5-mimic protein 1">
    <location>
        <begin position="1"/>
        <end position="419"/>
    </location>
</feature>
<feature type="domain" description="W2" evidence="2">
    <location>
        <begin position="248"/>
        <end position="415"/>
    </location>
</feature>
<feature type="region of interest" description="Disordered" evidence="3">
    <location>
        <begin position="1"/>
        <end position="22"/>
    </location>
</feature>
<feature type="modified residue" description="N6-acetyllysine" evidence="1">
    <location>
        <position position="117"/>
    </location>
</feature>
<feature type="modified residue" description="Phosphoserine" evidence="1">
    <location>
        <position position="412"/>
    </location>
</feature>
<feature type="modified residue" description="Phosphoserine" evidence="1">
    <location>
        <position position="414"/>
    </location>
</feature>
<name>5MP1_MACFA</name>
<sequence length="419" mass="48090">MNKHQKPVLTGQRFKTRKRDEKEKFEPTVFRDTLVQGLNEAGDDLEAVAKFLDSTGSRLDYRRYADTLFDILVAGSMLAPGGTRIDDGDKTKMTNHCVFSANEDHETIRNYAQVFNKLIRRYKYLEKAFEDEMKKLLLFLKAFSETEQTKLAMLSGILLGNGTLPATILTSLFTDSLVKEGIAASFAVKLFKAWMAEKDANSVTSSLRKANLDKRLLELFPVNRQSVDHFAKYFTDAGLKELSDFLRVQQSLGTRKELQKELQERLSQECPIKEVVLYVKEEMKRNDLPETAVIGLLWTCIMNAVEWNKKEELVAEQALKHLKQYAPLLAVFSSQGQSELILLQKVQEYCYDNIHFMKAFQKIVVLFYKADVLSEEAILKWYKEAHVAKGKSVFLDQMKKFVEWLQNAEEESESEGEGN</sequence>
<reference key="1">
    <citation type="submission" date="2005-06" db="EMBL/GenBank/DDBJ databases">
        <title>DNA sequences of macaque genes expressed in brain or testis and its evolutionary implications.</title>
        <authorList>
            <consortium name="International consortium for macaque cDNA sequencing and analysis"/>
        </authorList>
    </citation>
    <scope>NUCLEOTIDE SEQUENCE [LARGE SCALE MRNA]</scope>
    <source>
        <tissue>Testis</tissue>
    </source>
</reference>
<keyword id="KW-0007">Acetylation</keyword>
<keyword id="KW-0963">Cytoplasm</keyword>
<keyword id="KW-0597">Phosphoprotein</keyword>
<keyword id="KW-1185">Reference proteome</keyword>
<keyword id="KW-0810">Translation regulation</keyword>
<comment type="function">
    <text evidence="1">Translation initiation regulator which represses non-AUG initiated translation and repeat-associated non-AUG (RAN) initiated translation by acting as a competitive inhibitor of eukaryotic translation initiation factor 5 (EIF5) function (By similarity). Increases the accuracy of translation initiation by impeding EIF5-dependent translation from non-AUG codons by competing with it for interaction with EIF2S2 within the 43S pre-initiation complex (PIC) in an EIF3C-binding dependent manner (By similarity).</text>
</comment>
<comment type="subunit">
    <text evidence="1">Interacts with EIF3E, EIF2S2 and EIF3C.</text>
</comment>
<comment type="subcellular location">
    <subcellularLocation>
        <location evidence="1">Cytoplasm</location>
    </subcellularLocation>
</comment>
<comment type="similarity">
    <text evidence="4">Belongs to the BZW family.</text>
</comment>
<accession>Q4R6R4</accession>
<proteinExistence type="evidence at transcript level"/>